<feature type="chain" id="PRO_0000085644" description="Serine/threonine-protein kinase ATG1">
    <location>
        <begin position="1"/>
        <end position="988"/>
    </location>
</feature>
<feature type="domain" description="Protein kinase" evidence="2">
    <location>
        <begin position="27"/>
        <end position="346"/>
    </location>
</feature>
<feature type="region of interest" description="Disordered" evidence="4">
    <location>
        <begin position="1"/>
        <end position="21"/>
    </location>
</feature>
<feature type="region of interest" description="Disordered" evidence="4">
    <location>
        <begin position="394"/>
        <end position="561"/>
    </location>
</feature>
<feature type="compositionally biased region" description="Low complexity" evidence="4">
    <location>
        <begin position="418"/>
        <end position="431"/>
    </location>
</feature>
<feature type="compositionally biased region" description="Pro residues" evidence="4">
    <location>
        <begin position="449"/>
        <end position="463"/>
    </location>
</feature>
<feature type="compositionally biased region" description="Polar residues" evidence="4">
    <location>
        <begin position="468"/>
        <end position="478"/>
    </location>
</feature>
<feature type="active site" description="Proton acceptor" evidence="2 3">
    <location>
        <position position="183"/>
    </location>
</feature>
<feature type="binding site" evidence="2">
    <location>
        <begin position="33"/>
        <end position="41"/>
    </location>
    <ligand>
        <name>ATP</name>
        <dbReference type="ChEBI" id="CHEBI:30616"/>
    </ligand>
</feature>
<feature type="binding site" evidence="2">
    <location>
        <position position="56"/>
    </location>
    <ligand>
        <name>ATP</name>
        <dbReference type="ChEBI" id="CHEBI:30616"/>
    </ligand>
</feature>
<name>ATG1_CRYNJ</name>
<sequence>MPDSNAQGSREKESGHHRSHKERIGNYVVGAEIGRGSFATVYKGYRSKTRVPIAIKAVSRQKLTSKLLENLESEINILKVINHRNIVALTDCFKNDTHIYLVMEYCSGSDLSVYIKQRGNIPTLDFVPKAGSSMALLPTDDEGKIYWPHPPTGGLDERVTRSFLGQLAQAIKFLRAQDLMHRDIKPQNLLLQPATETEVAEGHPYGIPVLKVADFGFARILPAAAMAETLCGSPLYMAPEILRYEKYDAKADLWSVGAVLFEMSVGRPPFRANNHVELLRRIEKSNDNIVFPDEKERDSKSSDETSIPVPSDIKALIRALLKRKPNDRMGFDDFFNCGVWDGHMAESTEEESLSLDVSTDSSAGLGESDRIRQMVASTEQSKDRLIPTRAPQPLAADAALNPQPAVPISRDTSEGRSRLSTPPSRPTPTRRSTPKYYVGDATPSEPTAIIPPSPSSAPTPTSAPDPGLTTQQSPTSRANPRPIITAASSAQRRMSGKGDGREASSVEEAAPITPPFAGPSPTMARPSRGINEGSPLAAAPPITMGPDGRLERSSALEGSTSGVGTDYVVVEKQTVEINALADELDQASKRPMIRRSSRGSVVSRPVSSFKPISPNIAKNDPTLGPISYSPPFALSSTPPFAMQVPRHASGGNSFPRNPSIPSSLNAFPPTTISASPSYGQDAAARFGVSPGSLQTGALARALTNTAIRLIGTSANTAATAIARATAKRRPNIVRVSDMDAAEDDLLCTVEDLARKAFVLFELADERLLAQTQLAQTARTSSTPTGLTGTTPPFSMQAAAAAQAGSRRKSSSSSMNSEVWILRQQEAAANDAVVLYMKSLAFIVKAMDKVKRYWKNRTDVYDGYVASQELNEMGQWLRARFNETFEKAEWAKTQAGDTLLFPDWLVHDKARDTSRQAAVAELQGDLTTAEQGYETSLWLLQALLDESVYENGSIPDEDKVAYDRLMVPIKTRLDALRKKLAESSGMTAR</sequence>
<accession>P0CP70</accession>
<accession>Q55MD9</accession>
<accession>Q5K8D3</accession>
<comment type="function">
    <text evidence="1">Serine/threonine protein kinase involved in the cytoplasm to vacuole transport (Cvt) and found to be essential in autophagy, where it is required for the formation of autophagosomes. Involved in the clearance of protein aggregates which cannot be efficiently cleared by the proteasome. Required for selective autophagic degradation of the nucleus (nucleophagy) as well as for mitophagy which contributes to regulate mitochondrial quantity and quality by eliminating the mitochondria to a basal level to fulfill cellular energy requirements and preventing excess ROS production. Also involved in endoplasmic reticulum-specific autophagic process, in selective removal of ER-associated degradation (ERAD) substrates. Plays a key role in ATG9 and ATG23 cycling through the pre-autophagosomal structure and is necessary to promote ATG18 binding to ATG9 through phosphorylation of ATG9. Catalyzes phosphorylation of ATG4, decreasing the interaction between ATG4 and ATG8 and impairing deconjugation of PE-conjugated forms of ATG8.</text>
</comment>
<comment type="catalytic activity">
    <reaction evidence="1">
        <text>L-seryl-[protein] + ATP = O-phospho-L-seryl-[protein] + ADP + H(+)</text>
        <dbReference type="Rhea" id="RHEA:17989"/>
        <dbReference type="Rhea" id="RHEA-COMP:9863"/>
        <dbReference type="Rhea" id="RHEA-COMP:11604"/>
        <dbReference type="ChEBI" id="CHEBI:15378"/>
        <dbReference type="ChEBI" id="CHEBI:29999"/>
        <dbReference type="ChEBI" id="CHEBI:30616"/>
        <dbReference type="ChEBI" id="CHEBI:83421"/>
        <dbReference type="ChEBI" id="CHEBI:456216"/>
        <dbReference type="EC" id="2.7.11.1"/>
    </reaction>
</comment>
<comment type="catalytic activity">
    <reaction evidence="1">
        <text>L-threonyl-[protein] + ATP = O-phospho-L-threonyl-[protein] + ADP + H(+)</text>
        <dbReference type="Rhea" id="RHEA:46608"/>
        <dbReference type="Rhea" id="RHEA-COMP:11060"/>
        <dbReference type="Rhea" id="RHEA-COMP:11605"/>
        <dbReference type="ChEBI" id="CHEBI:15378"/>
        <dbReference type="ChEBI" id="CHEBI:30013"/>
        <dbReference type="ChEBI" id="CHEBI:30616"/>
        <dbReference type="ChEBI" id="CHEBI:61977"/>
        <dbReference type="ChEBI" id="CHEBI:456216"/>
        <dbReference type="EC" id="2.7.11.1"/>
    </reaction>
</comment>
<comment type="subunit">
    <text evidence="1">Homodimer. Forms a ternary complex with ATG13 and ATG17.</text>
</comment>
<comment type="subcellular location">
    <subcellularLocation>
        <location evidence="1">Cytoplasm</location>
    </subcellularLocation>
    <subcellularLocation>
        <location evidence="1">Preautophagosomal structure membrane</location>
        <topology evidence="1">Peripheral membrane protein</topology>
    </subcellularLocation>
</comment>
<comment type="similarity">
    <text evidence="2">Belongs to the protein kinase superfamily. Ser/Thr protein kinase family. APG1/unc-51/ULK1 subfamily.</text>
</comment>
<proteinExistence type="inferred from homology"/>
<keyword id="KW-0067">ATP-binding</keyword>
<keyword id="KW-0072">Autophagy</keyword>
<keyword id="KW-0963">Cytoplasm</keyword>
<keyword id="KW-0418">Kinase</keyword>
<keyword id="KW-0472">Membrane</keyword>
<keyword id="KW-0547">Nucleotide-binding</keyword>
<keyword id="KW-0653">Protein transport</keyword>
<keyword id="KW-1185">Reference proteome</keyword>
<keyword id="KW-0723">Serine/threonine-protein kinase</keyword>
<keyword id="KW-0808">Transferase</keyword>
<keyword id="KW-0813">Transport</keyword>
<organism>
    <name type="scientific">Cryptococcus neoformans var. neoformans serotype D (strain JEC21 / ATCC MYA-565)</name>
    <name type="common">Filobasidiella neoformans</name>
    <dbReference type="NCBI Taxonomy" id="214684"/>
    <lineage>
        <taxon>Eukaryota</taxon>
        <taxon>Fungi</taxon>
        <taxon>Dikarya</taxon>
        <taxon>Basidiomycota</taxon>
        <taxon>Agaricomycotina</taxon>
        <taxon>Tremellomycetes</taxon>
        <taxon>Tremellales</taxon>
        <taxon>Cryptococcaceae</taxon>
        <taxon>Cryptococcus</taxon>
        <taxon>Cryptococcus neoformans species complex</taxon>
    </lineage>
</organism>
<gene>
    <name evidence="1" type="primary">ATG1</name>
    <name evidence="5" type="ordered locus">CNL06100</name>
</gene>
<dbReference type="EC" id="2.7.11.1" evidence="1"/>
<dbReference type="EMBL" id="AE017352">
    <property type="protein sequence ID" value="AAW46622.2"/>
    <property type="molecule type" value="Genomic_DNA"/>
</dbReference>
<dbReference type="RefSeq" id="XP_568139.1">
    <property type="nucleotide sequence ID" value="XM_568139.1"/>
</dbReference>
<dbReference type="SMR" id="P0CP70"/>
<dbReference type="FunCoup" id="P0CP70">
    <property type="interactions" value="115"/>
</dbReference>
<dbReference type="STRING" id="214684.P0CP70"/>
<dbReference type="PaxDb" id="214684-P0CP70"/>
<dbReference type="EnsemblFungi" id="AAW46622">
    <property type="protein sequence ID" value="AAW46622"/>
    <property type="gene ID" value="CNL06100"/>
</dbReference>
<dbReference type="VEuPathDB" id="FungiDB:CNL06100"/>
<dbReference type="eggNOG" id="KOG0595">
    <property type="taxonomic scope" value="Eukaryota"/>
</dbReference>
<dbReference type="InParanoid" id="P0CP70"/>
<dbReference type="OrthoDB" id="346907at2759"/>
<dbReference type="PHI-base" id="PHI:9135"/>
<dbReference type="Proteomes" id="UP000002149">
    <property type="component" value="Chromosome 12"/>
</dbReference>
<dbReference type="GO" id="GO:0005776">
    <property type="term" value="C:autophagosome"/>
    <property type="evidence" value="ECO:0000318"/>
    <property type="project" value="GO_Central"/>
</dbReference>
<dbReference type="GO" id="GO:0005737">
    <property type="term" value="C:cytoplasm"/>
    <property type="evidence" value="ECO:0000318"/>
    <property type="project" value="GO_Central"/>
</dbReference>
<dbReference type="GO" id="GO:0005829">
    <property type="term" value="C:cytosol"/>
    <property type="evidence" value="ECO:0000318"/>
    <property type="project" value="GO_Central"/>
</dbReference>
<dbReference type="GO" id="GO:0000407">
    <property type="term" value="C:phagophore assembly site"/>
    <property type="evidence" value="ECO:0000318"/>
    <property type="project" value="GO_Central"/>
</dbReference>
<dbReference type="GO" id="GO:0034045">
    <property type="term" value="C:phagophore assembly site membrane"/>
    <property type="evidence" value="ECO:0000318"/>
    <property type="project" value="GO_Central"/>
</dbReference>
<dbReference type="GO" id="GO:0005524">
    <property type="term" value="F:ATP binding"/>
    <property type="evidence" value="ECO:0007669"/>
    <property type="project" value="UniProtKB-KW"/>
</dbReference>
<dbReference type="GO" id="GO:0106310">
    <property type="term" value="F:protein serine kinase activity"/>
    <property type="evidence" value="ECO:0007669"/>
    <property type="project" value="RHEA"/>
</dbReference>
<dbReference type="GO" id="GO:0004674">
    <property type="term" value="F:protein serine/threonine kinase activity"/>
    <property type="evidence" value="ECO:0000318"/>
    <property type="project" value="GO_Central"/>
</dbReference>
<dbReference type="GO" id="GO:0000045">
    <property type="term" value="P:autophagosome assembly"/>
    <property type="evidence" value="ECO:0000318"/>
    <property type="project" value="GO_Central"/>
</dbReference>
<dbReference type="GO" id="GO:0000423">
    <property type="term" value="P:mitophagy"/>
    <property type="evidence" value="ECO:0000318"/>
    <property type="project" value="GO_Central"/>
</dbReference>
<dbReference type="GO" id="GO:0034727">
    <property type="term" value="P:piecemeal microautophagy of the nucleus"/>
    <property type="evidence" value="ECO:0000318"/>
    <property type="project" value="GO_Central"/>
</dbReference>
<dbReference type="GO" id="GO:0015031">
    <property type="term" value="P:protein transport"/>
    <property type="evidence" value="ECO:0007669"/>
    <property type="project" value="UniProtKB-KW"/>
</dbReference>
<dbReference type="GO" id="GO:0010506">
    <property type="term" value="P:regulation of autophagy"/>
    <property type="evidence" value="ECO:0000318"/>
    <property type="project" value="GO_Central"/>
</dbReference>
<dbReference type="GO" id="GO:0042594">
    <property type="term" value="P:response to starvation"/>
    <property type="evidence" value="ECO:0000318"/>
    <property type="project" value="GO_Central"/>
</dbReference>
<dbReference type="GO" id="GO:0061709">
    <property type="term" value="P:reticulophagy"/>
    <property type="evidence" value="ECO:0000318"/>
    <property type="project" value="GO_Central"/>
</dbReference>
<dbReference type="CDD" id="cd14009">
    <property type="entry name" value="STKc_ATG1_ULK_like"/>
    <property type="match status" value="1"/>
</dbReference>
<dbReference type="FunFam" id="1.10.510.10:FF:000915">
    <property type="entry name" value="Serine/threonine-protein kinase ATG1"/>
    <property type="match status" value="1"/>
</dbReference>
<dbReference type="FunFam" id="3.30.200.20:FF:000399">
    <property type="entry name" value="Serine/threonine-protein kinase atg1"/>
    <property type="match status" value="1"/>
</dbReference>
<dbReference type="Gene3D" id="3.30.200.20">
    <property type="entry name" value="Phosphorylase Kinase, domain 1"/>
    <property type="match status" value="1"/>
</dbReference>
<dbReference type="Gene3D" id="1.10.510.10">
    <property type="entry name" value="Transferase(Phosphotransferase) domain 1"/>
    <property type="match status" value="1"/>
</dbReference>
<dbReference type="InterPro" id="IPR045269">
    <property type="entry name" value="Atg1-like"/>
</dbReference>
<dbReference type="InterPro" id="IPR048941">
    <property type="entry name" value="ATG1-like_MIT2"/>
</dbReference>
<dbReference type="InterPro" id="IPR022708">
    <property type="entry name" value="Atg1-like_tMIT"/>
</dbReference>
<dbReference type="InterPro" id="IPR011009">
    <property type="entry name" value="Kinase-like_dom_sf"/>
</dbReference>
<dbReference type="InterPro" id="IPR000719">
    <property type="entry name" value="Prot_kinase_dom"/>
</dbReference>
<dbReference type="InterPro" id="IPR017441">
    <property type="entry name" value="Protein_kinase_ATP_BS"/>
</dbReference>
<dbReference type="InterPro" id="IPR001245">
    <property type="entry name" value="Ser-Thr/Tyr_kinase_cat_dom"/>
</dbReference>
<dbReference type="InterPro" id="IPR008271">
    <property type="entry name" value="Ser/Thr_kinase_AS"/>
</dbReference>
<dbReference type="PANTHER" id="PTHR24348:SF22">
    <property type="entry name" value="NON-SPECIFIC SERINE_THREONINE PROTEIN KINASE"/>
    <property type="match status" value="1"/>
</dbReference>
<dbReference type="PANTHER" id="PTHR24348">
    <property type="entry name" value="SERINE/THREONINE-PROTEIN KINASE UNC-51-RELATED"/>
    <property type="match status" value="1"/>
</dbReference>
<dbReference type="Pfam" id="PF12063">
    <property type="entry name" value="ATG1-like_MIT1"/>
    <property type="match status" value="1"/>
</dbReference>
<dbReference type="Pfam" id="PF21127">
    <property type="entry name" value="ATG1-like_MIT2"/>
    <property type="match status" value="1"/>
</dbReference>
<dbReference type="Pfam" id="PF07714">
    <property type="entry name" value="PK_Tyr_Ser-Thr"/>
    <property type="match status" value="1"/>
</dbReference>
<dbReference type="SMART" id="SM00220">
    <property type="entry name" value="S_TKc"/>
    <property type="match status" value="1"/>
</dbReference>
<dbReference type="SUPFAM" id="SSF56112">
    <property type="entry name" value="Protein kinase-like (PK-like)"/>
    <property type="match status" value="1"/>
</dbReference>
<dbReference type="PROSITE" id="PS00107">
    <property type="entry name" value="PROTEIN_KINASE_ATP"/>
    <property type="match status" value="1"/>
</dbReference>
<dbReference type="PROSITE" id="PS50011">
    <property type="entry name" value="PROTEIN_KINASE_DOM"/>
    <property type="match status" value="1"/>
</dbReference>
<dbReference type="PROSITE" id="PS00108">
    <property type="entry name" value="PROTEIN_KINASE_ST"/>
    <property type="match status" value="1"/>
</dbReference>
<evidence type="ECO:0000250" key="1">
    <source>
        <dbReference type="UniProtKB" id="P53104"/>
    </source>
</evidence>
<evidence type="ECO:0000255" key="2">
    <source>
        <dbReference type="PROSITE-ProRule" id="PRU00159"/>
    </source>
</evidence>
<evidence type="ECO:0000255" key="3">
    <source>
        <dbReference type="PROSITE-ProRule" id="PRU10027"/>
    </source>
</evidence>
<evidence type="ECO:0000256" key="4">
    <source>
        <dbReference type="SAM" id="MobiDB-lite"/>
    </source>
</evidence>
<evidence type="ECO:0000303" key="5">
    <source>
    </source>
</evidence>
<reference key="1">
    <citation type="journal article" date="2005" name="Science">
        <title>The genome of the basidiomycetous yeast and human pathogen Cryptococcus neoformans.</title>
        <authorList>
            <person name="Loftus B.J."/>
            <person name="Fung E."/>
            <person name="Roncaglia P."/>
            <person name="Rowley D."/>
            <person name="Amedeo P."/>
            <person name="Bruno D."/>
            <person name="Vamathevan J."/>
            <person name="Miranda M."/>
            <person name="Anderson I.J."/>
            <person name="Fraser J.A."/>
            <person name="Allen J.E."/>
            <person name="Bosdet I.E."/>
            <person name="Brent M.R."/>
            <person name="Chiu R."/>
            <person name="Doering T.L."/>
            <person name="Donlin M.J."/>
            <person name="D'Souza C.A."/>
            <person name="Fox D.S."/>
            <person name="Grinberg V."/>
            <person name="Fu J."/>
            <person name="Fukushima M."/>
            <person name="Haas B.J."/>
            <person name="Huang J.C."/>
            <person name="Janbon G."/>
            <person name="Jones S.J.M."/>
            <person name="Koo H.L."/>
            <person name="Krzywinski M.I."/>
            <person name="Kwon-Chung K.J."/>
            <person name="Lengeler K.B."/>
            <person name="Maiti R."/>
            <person name="Marra M.A."/>
            <person name="Marra R.E."/>
            <person name="Mathewson C.A."/>
            <person name="Mitchell T.G."/>
            <person name="Pertea M."/>
            <person name="Riggs F.R."/>
            <person name="Salzberg S.L."/>
            <person name="Schein J.E."/>
            <person name="Shvartsbeyn A."/>
            <person name="Shin H."/>
            <person name="Shumway M."/>
            <person name="Specht C.A."/>
            <person name="Suh B.B."/>
            <person name="Tenney A."/>
            <person name="Utterback T.R."/>
            <person name="Wickes B.L."/>
            <person name="Wortman J.R."/>
            <person name="Wye N.H."/>
            <person name="Kronstad J.W."/>
            <person name="Lodge J.K."/>
            <person name="Heitman J."/>
            <person name="Davis R.W."/>
            <person name="Fraser C.M."/>
            <person name="Hyman R.W."/>
        </authorList>
    </citation>
    <scope>NUCLEOTIDE SEQUENCE [LARGE SCALE GENOMIC DNA]</scope>
    <source>
        <strain>JEC21 / ATCC MYA-565</strain>
    </source>
</reference>
<protein>
    <recommendedName>
        <fullName evidence="1">Serine/threonine-protein kinase ATG1</fullName>
        <ecNumber evidence="1">2.7.11.1</ecNumber>
    </recommendedName>
    <alternativeName>
        <fullName evidence="1">Autophagy-related protein 1</fullName>
    </alternativeName>
</protein>